<feature type="chain" id="PRO_0000408270" description="Protein BDLF2">
    <location>
        <begin position="1"/>
        <end position="420"/>
    </location>
</feature>
<feature type="topological domain" description="Intravirion">
    <location>
        <begin position="1"/>
        <end position="184"/>
    </location>
</feature>
<feature type="transmembrane region" description="Helical; Signal-anchor for type II membrane protein" evidence="2">
    <location>
        <begin position="185"/>
        <end position="205"/>
    </location>
</feature>
<feature type="topological domain" description="Virion surface">
    <location>
        <begin position="206"/>
        <end position="420"/>
    </location>
</feature>
<feature type="region of interest" description="Disordered" evidence="3">
    <location>
        <begin position="1"/>
        <end position="21"/>
    </location>
</feature>
<feature type="region of interest" description="Disordered" evidence="3">
    <location>
        <begin position="64"/>
        <end position="129"/>
    </location>
</feature>
<feature type="compositionally biased region" description="Low complexity" evidence="3">
    <location>
        <begin position="92"/>
        <end position="108"/>
    </location>
</feature>
<feature type="glycosylation site" description="N-linked (GlcNAc...) asparagine; by host" evidence="2">
    <location>
        <position position="258"/>
    </location>
</feature>
<feature type="glycosylation site" description="N-linked (GlcNAc...) asparagine; by host" evidence="2">
    <location>
        <position position="264"/>
    </location>
</feature>
<feature type="glycosylation site" description="N-linked (GlcNAc...) asparagine; by host" evidence="2">
    <location>
        <position position="300"/>
    </location>
</feature>
<feature type="glycosylation site" description="N-linked (GlcNAc...) asparagine; by host" evidence="2">
    <location>
        <position position="304"/>
    </location>
</feature>
<feature type="glycosylation site" description="N-linked (GlcNAc...) asparagine; by host" evidence="2">
    <location>
        <position position="371"/>
    </location>
</feature>
<feature type="glycosylation site" description="N-linked (GlcNAc...) asparagine; by host" evidence="2">
    <location>
        <position position="384"/>
    </location>
</feature>
<dbReference type="EMBL" id="AY961628">
    <property type="protein sequence ID" value="AAY41142.1"/>
    <property type="molecule type" value="Genomic_DNA"/>
</dbReference>
<dbReference type="IntAct" id="Q3KSQ7">
    <property type="interactions" value="17"/>
</dbReference>
<dbReference type="MINT" id="Q3KSQ7"/>
<dbReference type="Proteomes" id="UP000007641">
    <property type="component" value="Genome"/>
</dbReference>
<dbReference type="GO" id="GO:0016020">
    <property type="term" value="C:membrane"/>
    <property type="evidence" value="ECO:0007669"/>
    <property type="project" value="UniProtKB-KW"/>
</dbReference>
<dbReference type="GO" id="GO:0019031">
    <property type="term" value="C:viral envelope"/>
    <property type="evidence" value="ECO:0007669"/>
    <property type="project" value="UniProtKB-KW"/>
</dbReference>
<dbReference type="GO" id="GO:0055036">
    <property type="term" value="C:virion membrane"/>
    <property type="evidence" value="ECO:0007669"/>
    <property type="project" value="UniProtKB-SubCell"/>
</dbReference>
<reference key="1">
    <citation type="journal article" date="2005" name="J. Virol.">
        <title>Genomic sequence analysis of Epstein-Barr virus strain GD1 from a nasopharyngeal carcinoma patient.</title>
        <authorList>
            <person name="Zeng M.-S."/>
            <person name="Li D.-J."/>
            <person name="Liu Q.-L."/>
            <person name="Song L.-B."/>
            <person name="Li M.-Z."/>
            <person name="Zhang R.-H."/>
            <person name="Yu X.-J."/>
            <person name="Wang H.-M."/>
            <person name="Ernberg I."/>
            <person name="Zeng Y.-X."/>
        </authorList>
    </citation>
    <scope>NUCLEOTIDE SEQUENCE [LARGE SCALE GENOMIC DNA]</scope>
</reference>
<evidence type="ECO:0000250" key="1"/>
<evidence type="ECO:0000255" key="2"/>
<evidence type="ECO:0000256" key="3">
    <source>
        <dbReference type="SAM" id="MobiDB-lite"/>
    </source>
</evidence>
<evidence type="ECO:0000305" key="4"/>
<name>BDLF2_EBVG</name>
<organism>
    <name type="scientific">Epstein-Barr virus (strain GD1)</name>
    <name type="common">HHV-4</name>
    <name type="synonym">Human gammaherpesvirus 4</name>
    <dbReference type="NCBI Taxonomy" id="10376"/>
    <lineage>
        <taxon>Viruses</taxon>
        <taxon>Duplodnaviria</taxon>
        <taxon>Heunggongvirae</taxon>
        <taxon>Peploviricota</taxon>
        <taxon>Herviviricetes</taxon>
        <taxon>Herpesvirales</taxon>
        <taxon>Orthoherpesviridae</taxon>
        <taxon>Gammaherpesvirinae</taxon>
        <taxon>Lymphocryptovirus</taxon>
        <taxon>Lymphocryptovirus humangamma4</taxon>
    </lineage>
</organism>
<sequence length="420" mass="46072">MVDEQVAVEHGTVSHTISREEDGVVHERRVLASGERVEVFYKAPAPRPREGRASTFHDFTVPAAAAVPGPEPEPEPHPAMPIHANGGGETKTNTQDQNQNQTTRARTNAKAEERTAEMDDTMASSGGQRGAPISADLLSLSSLTGRMAAMAPSWMKSEVCGERMRFKEDVYDGEAETLAEPPRCFMLSFVFIYYCCYLAFLALLAFGFNPLFLPSFMPVGAKVLRGKGRDFGVPLSYGCPTNPFCKVYTLIPAVVINNVTYYPNNTDSLGGHGGFEAAALHVAALFESGCPNLQAVTNRNRTFNVTRASGRVERRLVQDMQRVLASAVVVMHHHCHYETYYVFDGVGPEFGTIPTPSFKDVLAFRPSLVTNCTAPLKTSVKGPNWSGAAGGMKRKQCRVDRLTDRSFPAYLEEVMYVMVQ</sequence>
<gene>
    <name type="ORF">BDLF2</name>
</gene>
<accession>Q3KSQ7</accession>
<organismHost>
    <name type="scientific">Homo sapiens</name>
    <name type="common">Human</name>
    <dbReference type="NCBI Taxonomy" id="9606"/>
</organismHost>
<keyword id="KW-0325">Glycoprotein</keyword>
<keyword id="KW-0426">Late protein</keyword>
<keyword id="KW-0472">Membrane</keyword>
<keyword id="KW-0735">Signal-anchor</keyword>
<keyword id="KW-0812">Transmembrane</keyword>
<keyword id="KW-1133">Transmembrane helix</keyword>
<keyword id="KW-0261">Viral envelope protein</keyword>
<keyword id="KW-0946">Virion</keyword>
<protein>
    <recommendedName>
        <fullName>Protein BDLF2</fullName>
    </recommendedName>
</protein>
<comment type="function">
    <text evidence="1">Rearranges cellular actin to increase intercellular contacts and thereby promote virus cell-to-cell spreading. Induce the outgrowth of long, branched plasma membrane fronds to create intercellular network for virion traffic. The fronds are actin based and RhoA-dependent (By similarity).</text>
</comment>
<comment type="subunit">
    <text evidence="1">Interacts with BMRF2.</text>
</comment>
<comment type="subcellular location">
    <subcellularLocation>
        <location evidence="1">Virion membrane</location>
        <topology evidence="1">Single-pass type II membrane protein</topology>
    </subcellularLocation>
</comment>
<comment type="domain">
    <text evidence="1">Plasma membrane remodeling is mediated by the cytoplasmic tail.</text>
</comment>
<comment type="similarity">
    <text evidence="4">Belongs to the herpesviridae BDLF2 family.</text>
</comment>
<proteinExistence type="inferred from homology"/>